<feature type="chain" id="PRO_1000201736" description="Endoribonuclease YbeY">
    <location>
        <begin position="1"/>
        <end position="158"/>
    </location>
</feature>
<feature type="binding site" evidence="1">
    <location>
        <position position="121"/>
    </location>
    <ligand>
        <name>Zn(2+)</name>
        <dbReference type="ChEBI" id="CHEBI:29105"/>
        <note>catalytic</note>
    </ligand>
</feature>
<feature type="binding site" evidence="1">
    <location>
        <position position="125"/>
    </location>
    <ligand>
        <name>Zn(2+)</name>
        <dbReference type="ChEBI" id="CHEBI:29105"/>
        <note>catalytic</note>
    </ligand>
</feature>
<feature type="binding site" evidence="1">
    <location>
        <position position="131"/>
    </location>
    <ligand>
        <name>Zn(2+)</name>
        <dbReference type="ChEBI" id="CHEBI:29105"/>
        <note>catalytic</note>
    </ligand>
</feature>
<reference key="1">
    <citation type="journal article" date="2011" name="J. Bacteriol.">
        <title>Complete genome sequence of the Thermophilic Bacterium Exiguobacterium sp. AT1b.</title>
        <authorList>
            <person name="Vishnivetskaya T.A."/>
            <person name="Lucas S."/>
            <person name="Copeland A."/>
            <person name="Lapidus A."/>
            <person name="Glavina del Rio T."/>
            <person name="Dalin E."/>
            <person name="Tice H."/>
            <person name="Bruce D.C."/>
            <person name="Goodwin L.A."/>
            <person name="Pitluck S."/>
            <person name="Saunders E."/>
            <person name="Brettin T."/>
            <person name="Detter C."/>
            <person name="Han C."/>
            <person name="Larimer F."/>
            <person name="Land M.L."/>
            <person name="Hauser L.J."/>
            <person name="Kyrpides N.C."/>
            <person name="Ovchinnikova G."/>
            <person name="Kathariou S."/>
            <person name="Ramaley R.F."/>
            <person name="Rodrigues D.F."/>
            <person name="Hendrix C."/>
            <person name="Richardson P."/>
            <person name="Tiedje J.M."/>
        </authorList>
    </citation>
    <scope>NUCLEOTIDE SEQUENCE [LARGE SCALE GENOMIC DNA]</scope>
    <source>
        <strain>ATCC BAA-1283 / AT1b</strain>
    </source>
</reference>
<organism>
    <name type="scientific">Exiguobacterium sp. (strain ATCC BAA-1283 / AT1b)</name>
    <dbReference type="NCBI Taxonomy" id="360911"/>
    <lineage>
        <taxon>Bacteria</taxon>
        <taxon>Bacillati</taxon>
        <taxon>Bacillota</taxon>
        <taxon>Bacilli</taxon>
        <taxon>Bacillales</taxon>
        <taxon>Bacillales Family XII. Incertae Sedis</taxon>
        <taxon>Exiguobacterium</taxon>
    </lineage>
</organism>
<dbReference type="EC" id="3.1.-.-" evidence="1"/>
<dbReference type="EMBL" id="CP001615">
    <property type="protein sequence ID" value="ACQ69530.1"/>
    <property type="molecule type" value="Genomic_DNA"/>
</dbReference>
<dbReference type="RefSeq" id="WP_012726649.1">
    <property type="nucleotide sequence ID" value="NC_012673.1"/>
</dbReference>
<dbReference type="SMR" id="C4L408"/>
<dbReference type="STRING" id="360911.EAT1b_0598"/>
<dbReference type="KEGG" id="eat:EAT1b_0598"/>
<dbReference type="eggNOG" id="COG0319">
    <property type="taxonomic scope" value="Bacteria"/>
</dbReference>
<dbReference type="HOGENOM" id="CLU_106710_3_0_9"/>
<dbReference type="OrthoDB" id="9807740at2"/>
<dbReference type="Proteomes" id="UP000000716">
    <property type="component" value="Chromosome"/>
</dbReference>
<dbReference type="GO" id="GO:0005737">
    <property type="term" value="C:cytoplasm"/>
    <property type="evidence" value="ECO:0007669"/>
    <property type="project" value="UniProtKB-SubCell"/>
</dbReference>
<dbReference type="GO" id="GO:0004222">
    <property type="term" value="F:metalloendopeptidase activity"/>
    <property type="evidence" value="ECO:0007669"/>
    <property type="project" value="InterPro"/>
</dbReference>
<dbReference type="GO" id="GO:0004521">
    <property type="term" value="F:RNA endonuclease activity"/>
    <property type="evidence" value="ECO:0007669"/>
    <property type="project" value="UniProtKB-UniRule"/>
</dbReference>
<dbReference type="GO" id="GO:0008270">
    <property type="term" value="F:zinc ion binding"/>
    <property type="evidence" value="ECO:0007669"/>
    <property type="project" value="UniProtKB-UniRule"/>
</dbReference>
<dbReference type="GO" id="GO:0006364">
    <property type="term" value="P:rRNA processing"/>
    <property type="evidence" value="ECO:0007669"/>
    <property type="project" value="UniProtKB-UniRule"/>
</dbReference>
<dbReference type="Gene3D" id="3.40.390.30">
    <property type="entry name" value="Metalloproteases ('zincins'), catalytic domain"/>
    <property type="match status" value="1"/>
</dbReference>
<dbReference type="HAMAP" id="MF_00009">
    <property type="entry name" value="Endoribonucl_YbeY"/>
    <property type="match status" value="1"/>
</dbReference>
<dbReference type="InterPro" id="IPR023091">
    <property type="entry name" value="MetalPrtase_cat_dom_sf_prd"/>
</dbReference>
<dbReference type="InterPro" id="IPR002036">
    <property type="entry name" value="YbeY"/>
</dbReference>
<dbReference type="InterPro" id="IPR020549">
    <property type="entry name" value="YbeY_CS"/>
</dbReference>
<dbReference type="NCBIfam" id="TIGR00043">
    <property type="entry name" value="rRNA maturation RNase YbeY"/>
    <property type="match status" value="1"/>
</dbReference>
<dbReference type="PANTHER" id="PTHR46986">
    <property type="entry name" value="ENDORIBONUCLEASE YBEY, CHLOROPLASTIC"/>
    <property type="match status" value="1"/>
</dbReference>
<dbReference type="PANTHER" id="PTHR46986:SF1">
    <property type="entry name" value="ENDORIBONUCLEASE YBEY, CHLOROPLASTIC"/>
    <property type="match status" value="1"/>
</dbReference>
<dbReference type="Pfam" id="PF02130">
    <property type="entry name" value="YbeY"/>
    <property type="match status" value="1"/>
</dbReference>
<dbReference type="SUPFAM" id="SSF55486">
    <property type="entry name" value="Metalloproteases ('zincins'), catalytic domain"/>
    <property type="match status" value="1"/>
</dbReference>
<dbReference type="PROSITE" id="PS01306">
    <property type="entry name" value="UPF0054"/>
    <property type="match status" value="1"/>
</dbReference>
<protein>
    <recommendedName>
        <fullName evidence="1">Endoribonuclease YbeY</fullName>
        <ecNumber evidence="1">3.1.-.-</ecNumber>
    </recommendedName>
</protein>
<keyword id="KW-0963">Cytoplasm</keyword>
<keyword id="KW-0255">Endonuclease</keyword>
<keyword id="KW-0378">Hydrolase</keyword>
<keyword id="KW-0479">Metal-binding</keyword>
<keyword id="KW-0540">Nuclease</keyword>
<keyword id="KW-0690">Ribosome biogenesis</keyword>
<keyword id="KW-0698">rRNA processing</keyword>
<keyword id="KW-0862">Zinc</keyword>
<evidence type="ECO:0000255" key="1">
    <source>
        <dbReference type="HAMAP-Rule" id="MF_00009"/>
    </source>
</evidence>
<gene>
    <name evidence="1" type="primary">ybeY</name>
    <name type="ordered locus">EAT1b_0598</name>
</gene>
<accession>C4L408</accession>
<proteinExistence type="inferred from homology"/>
<name>YBEY_EXISA</name>
<sequence length="158" mass="18128">MQIISNDEHELLTTSQIELVESILQHAAQLEGVEEPSELSVTYLTNAEIHEVNREWRGKDAPTDVISFAFDEMGDEEMDFMLDEDEPHLLGDLVISVERCREQAADYGHSFERELGFLAIHGFLHLLGYDHMTPEEEAEMTARQEEVLTHFELKRGNV</sequence>
<comment type="function">
    <text evidence="1">Single strand-specific metallo-endoribonuclease involved in late-stage 70S ribosome quality control and in maturation of the 3' terminus of the 16S rRNA.</text>
</comment>
<comment type="cofactor">
    <cofactor evidence="1">
        <name>Zn(2+)</name>
        <dbReference type="ChEBI" id="CHEBI:29105"/>
    </cofactor>
    <text evidence="1">Binds 1 zinc ion.</text>
</comment>
<comment type="subcellular location">
    <subcellularLocation>
        <location evidence="1">Cytoplasm</location>
    </subcellularLocation>
</comment>
<comment type="similarity">
    <text evidence="1">Belongs to the endoribonuclease YbeY family.</text>
</comment>